<accession>Q6G907</accession>
<keyword id="KW-0479">Metal-binding</keyword>
<keyword id="KW-0862">Zinc</keyword>
<proteinExistence type="inferred from homology"/>
<name>GCH1L_STAAS</name>
<comment type="subunit">
    <text evidence="1">Homohexamer.</text>
</comment>
<comment type="similarity">
    <text evidence="2">Belongs to the GTP cyclohydrolase I type 2/NIF3 family.</text>
</comment>
<reference key="1">
    <citation type="journal article" date="2004" name="Proc. Natl. Acad. Sci. U.S.A.">
        <title>Complete genomes of two clinical Staphylococcus aureus strains: evidence for the rapid evolution of virulence and drug resistance.</title>
        <authorList>
            <person name="Holden M.T.G."/>
            <person name="Feil E.J."/>
            <person name="Lindsay J.A."/>
            <person name="Peacock S.J."/>
            <person name="Day N.P.J."/>
            <person name="Enright M.C."/>
            <person name="Foster T.J."/>
            <person name="Moore C.E."/>
            <person name="Hurst L."/>
            <person name="Atkin R."/>
            <person name="Barron A."/>
            <person name="Bason N."/>
            <person name="Bentley S.D."/>
            <person name="Chillingworth C."/>
            <person name="Chillingworth T."/>
            <person name="Churcher C."/>
            <person name="Clark L."/>
            <person name="Corton C."/>
            <person name="Cronin A."/>
            <person name="Doggett J."/>
            <person name="Dowd L."/>
            <person name="Feltwell T."/>
            <person name="Hance Z."/>
            <person name="Harris B."/>
            <person name="Hauser H."/>
            <person name="Holroyd S."/>
            <person name="Jagels K."/>
            <person name="James K.D."/>
            <person name="Lennard N."/>
            <person name="Line A."/>
            <person name="Mayes R."/>
            <person name="Moule S."/>
            <person name="Mungall K."/>
            <person name="Ormond D."/>
            <person name="Quail M.A."/>
            <person name="Rabbinowitsch E."/>
            <person name="Rutherford K.M."/>
            <person name="Sanders M."/>
            <person name="Sharp S."/>
            <person name="Simmonds M."/>
            <person name="Stevens K."/>
            <person name="Whitehead S."/>
            <person name="Barrell B.G."/>
            <person name="Spratt B.G."/>
            <person name="Parkhill J."/>
        </authorList>
    </citation>
    <scope>NUCLEOTIDE SEQUENCE [LARGE SCALE GENOMIC DNA]</scope>
    <source>
        <strain>MSSA476</strain>
    </source>
</reference>
<gene>
    <name type="ordered locus">SAS1497</name>
</gene>
<feature type="chain" id="PRO_0000147331" description="GTP cyclohydrolase 1 type 2 homolog">
    <location>
        <begin position="1"/>
        <end position="366"/>
    </location>
</feature>
<feature type="binding site" evidence="1">
    <location>
        <position position="64"/>
    </location>
    <ligand>
        <name>Zn(2+)</name>
        <dbReference type="ChEBI" id="CHEBI:29105"/>
        <label>1</label>
    </ligand>
</feature>
<feature type="binding site" evidence="1">
    <location>
        <position position="65"/>
    </location>
    <ligand>
        <name>Zn(2+)</name>
        <dbReference type="ChEBI" id="CHEBI:29105"/>
        <label>2</label>
    </ligand>
</feature>
<feature type="binding site" evidence="1">
    <location>
        <position position="102"/>
    </location>
    <ligand>
        <name>Zn(2+)</name>
        <dbReference type="ChEBI" id="CHEBI:29105"/>
        <label>1</label>
    </ligand>
</feature>
<feature type="binding site" evidence="1">
    <location>
        <position position="326"/>
    </location>
    <ligand>
        <name>Zn(2+)</name>
        <dbReference type="ChEBI" id="CHEBI:29105"/>
        <label>2</label>
    </ligand>
</feature>
<feature type="binding site" evidence="1">
    <location>
        <position position="329"/>
    </location>
    <ligand>
        <name>Zn(2+)</name>
        <dbReference type="ChEBI" id="CHEBI:29105"/>
        <label>1</label>
    </ligand>
</feature>
<feature type="binding site" evidence="1">
    <location>
        <position position="329"/>
    </location>
    <ligand>
        <name>Zn(2+)</name>
        <dbReference type="ChEBI" id="CHEBI:29105"/>
        <label>2</label>
    </ligand>
</feature>
<dbReference type="EMBL" id="BX571857">
    <property type="protein sequence ID" value="CAG43298.1"/>
    <property type="molecule type" value="Genomic_DNA"/>
</dbReference>
<dbReference type="RefSeq" id="WP_000683932.1">
    <property type="nucleotide sequence ID" value="NC_002953.3"/>
</dbReference>
<dbReference type="SMR" id="Q6G907"/>
<dbReference type="KEGG" id="sas:SAS1497"/>
<dbReference type="HOGENOM" id="CLU_037423_1_0_9"/>
<dbReference type="GO" id="GO:0005737">
    <property type="term" value="C:cytoplasm"/>
    <property type="evidence" value="ECO:0007669"/>
    <property type="project" value="TreeGrafter"/>
</dbReference>
<dbReference type="GO" id="GO:0046872">
    <property type="term" value="F:metal ion binding"/>
    <property type="evidence" value="ECO:0007669"/>
    <property type="project" value="UniProtKB-KW"/>
</dbReference>
<dbReference type="FunFam" id="3.40.1390.30:FF:000001">
    <property type="entry name" value="GTP cyclohydrolase 1 type 2"/>
    <property type="match status" value="1"/>
</dbReference>
<dbReference type="FunFam" id="3.30.70.120:FF:000006">
    <property type="entry name" value="GTP cyclohydrolase 1 type 2 homolog"/>
    <property type="match status" value="1"/>
</dbReference>
<dbReference type="Gene3D" id="3.30.70.120">
    <property type="match status" value="1"/>
</dbReference>
<dbReference type="Gene3D" id="3.40.1390.30">
    <property type="entry name" value="NIF3 (NGG1p interacting factor 3)-like"/>
    <property type="match status" value="1"/>
</dbReference>
<dbReference type="InterPro" id="IPR002678">
    <property type="entry name" value="DUF34/NIF3"/>
</dbReference>
<dbReference type="InterPro" id="IPR017221">
    <property type="entry name" value="DUF34/NIF3_bac"/>
</dbReference>
<dbReference type="InterPro" id="IPR036069">
    <property type="entry name" value="DUF34/NIF3_sf"/>
</dbReference>
<dbReference type="InterPro" id="IPR015867">
    <property type="entry name" value="N-reg_PII/ATP_PRibTrfase_C"/>
</dbReference>
<dbReference type="NCBIfam" id="TIGR00486">
    <property type="entry name" value="YbgI_SA1388"/>
    <property type="match status" value="1"/>
</dbReference>
<dbReference type="PANTHER" id="PTHR13799:SF14">
    <property type="entry name" value="GTP CYCLOHYDROLASE 1 TYPE 2 HOMOLOG"/>
    <property type="match status" value="1"/>
</dbReference>
<dbReference type="PANTHER" id="PTHR13799">
    <property type="entry name" value="NGG1 INTERACTING FACTOR 3"/>
    <property type="match status" value="1"/>
</dbReference>
<dbReference type="Pfam" id="PF01784">
    <property type="entry name" value="DUF34_NIF3"/>
    <property type="match status" value="1"/>
</dbReference>
<dbReference type="PIRSF" id="PIRSF037489">
    <property type="entry name" value="UCP037489_NIF3_YqfO"/>
    <property type="match status" value="1"/>
</dbReference>
<dbReference type="SUPFAM" id="SSF102705">
    <property type="entry name" value="NIF3 (NGG1p interacting factor 3)-like"/>
    <property type="match status" value="1"/>
</dbReference>
<evidence type="ECO:0000250" key="1">
    <source>
        <dbReference type="UniProtKB" id="P67272"/>
    </source>
</evidence>
<evidence type="ECO:0000305" key="2"/>
<protein>
    <recommendedName>
        <fullName>GTP cyclohydrolase 1 type 2 homolog</fullName>
    </recommendedName>
</protein>
<organism>
    <name type="scientific">Staphylococcus aureus (strain MSSA476)</name>
    <dbReference type="NCBI Taxonomy" id="282459"/>
    <lineage>
        <taxon>Bacteria</taxon>
        <taxon>Bacillati</taxon>
        <taxon>Bacillota</taxon>
        <taxon>Bacilli</taxon>
        <taxon>Bacillales</taxon>
        <taxon>Staphylococcaceae</taxon>
        <taxon>Staphylococcus</taxon>
    </lineage>
</organism>
<sequence>MKIADLMTLLDHHVPFSTAESWDNVGLLIGDEDVEVTGVLTALDCTLEVVNEAIEKGYNTIISHHPLIFKGVTSLKANGYGLIIRKLIQHDINLIAMHTNLDVNPYGVNMMLAKAMGLKNISIINNQQDVYYKVQTYIPKDNVGPFKDKLSENGLAQEGNYEYCFFESEGRGQFKPVGEANPTIGQIDKIEYVDEVKIEFMIDAYQKSRAEQLIKQYHPYETPVFDFIEIKQTSLYGLGVMAEVDNQMTLEDFAADIKSKLNIPSVRFVGESNQKIKRIAIIGGSGIGYEYQAVQQGADVFVTGDIKHHDALDAKIHGVNLIDINHYSEYVMKEGLKTLLMNRFNTEKINIDVEASTINTDPFQYI</sequence>